<comment type="function">
    <text evidence="1">Together with LptE, is involved in the assembly of lipopolysaccharide (LPS) at the surface of the outer membrane.</text>
</comment>
<comment type="subunit">
    <text evidence="1">Component of the lipopolysaccharide transport and assembly complex. Interacts with LptE and LptA.</text>
</comment>
<comment type="subcellular location">
    <subcellularLocation>
        <location evidence="1">Cell outer membrane</location>
    </subcellularLocation>
</comment>
<comment type="similarity">
    <text evidence="1">Belongs to the LptD family.</text>
</comment>
<keyword id="KW-0998">Cell outer membrane</keyword>
<keyword id="KW-0472">Membrane</keyword>
<keyword id="KW-0732">Signal</keyword>
<sequence length="813" mass="92508">MRRALRLLPLPLSIAICLPAMAADKPFNWGLCPTVDPLPGFDGAPAADPKAAEMRQQLPTDIEGDQLSGTSTTPQYQGNVALKRGDQFLGADNLRMDTETGNYIAEGNVRYQDTSFRMVADRAEGNQDTDTHKVTNIRYQLVERRGNGDAESVDLQGQVGQMHRSTYTTCDPSQPIWRVRAPEIDVDNGEGFGTARNAVLQIGNVPVLYFPWFKFPIDDRRQTGLLFPQFGLSRRNGFDYLQPIYLNLAPNYDATLLPRYMSKRGFMFGTEFRYLYEGGRGEVTGNYLPNDKLRDKDRGSVFYSGYHNVNSNWQARSSISWVSDTRYVEDFTSRLNGMGSTSSLQSTVGIYGTGETWTAGLMAERWQLTDYTLDERSLPYNRQPRAYFNWEKPFGIFEAGVYAEAVRFTHDDSYFVQPPSPSVPGEANNRDNNDKYVRTNIRNQEYGSGSRLDLKPYVSMPLSGAAWFFTPTLAWRYTAYQLDSTLAKTGPLTGDRSPSRSLPIASVDAGLYFDRETSLLGTNYLNTLEPRMYYLYVPYRDQDDLPVFDTRPFTFSYGQLFRDTRYTGADRQNDANQLTLAVTSRWLRQDDGREKLSLSAGQILYFSDSRVTINNSTNAVAGSEQTIDQGKSAWVVDANYMINDRWSMGATYQWNPNSRKEDLASLRTRYLLDNDGIINLAYRYRRNLIDNSDQLKQADFSFLYPINPSWSAVGRYYYSLQDRKPLEIIGGVQWDSCCLAVRGLVRRFVRNRDGQMDNSIQIEFVLKGLSSFGQNTDRTLRRAILGYYRDDLYLVPPSNTTTNPDDYDPNLIP</sequence>
<gene>
    <name evidence="1" type="primary">lptD</name>
    <name type="synonym">imp</name>
    <name type="synonym">ostA</name>
    <name type="ordered locus">XOO3535</name>
</gene>
<organism>
    <name type="scientific">Xanthomonas oryzae pv. oryzae (strain MAFF 311018)</name>
    <dbReference type="NCBI Taxonomy" id="342109"/>
    <lineage>
        <taxon>Bacteria</taxon>
        <taxon>Pseudomonadati</taxon>
        <taxon>Pseudomonadota</taxon>
        <taxon>Gammaproteobacteria</taxon>
        <taxon>Lysobacterales</taxon>
        <taxon>Lysobacteraceae</taxon>
        <taxon>Xanthomonas</taxon>
    </lineage>
</organism>
<evidence type="ECO:0000255" key="1">
    <source>
        <dbReference type="HAMAP-Rule" id="MF_01411"/>
    </source>
</evidence>
<accession>Q2NZI7</accession>
<protein>
    <recommendedName>
        <fullName evidence="1">LPS-assembly protein LptD</fullName>
    </recommendedName>
</protein>
<name>LPTD_XANOM</name>
<reference key="1">
    <citation type="journal article" date="2005" name="Jpn. Agric. Res. Q.">
        <title>Genome sequence of Xanthomonas oryzae pv. oryzae suggests contribution of large numbers of effector genes and insertion sequences to its race diversity.</title>
        <authorList>
            <person name="Ochiai H."/>
            <person name="Inoue Y."/>
            <person name="Takeya M."/>
            <person name="Sasaki A."/>
            <person name="Kaku H."/>
        </authorList>
    </citation>
    <scope>NUCLEOTIDE SEQUENCE [LARGE SCALE GENOMIC DNA]</scope>
    <source>
        <strain>MAFF 311018</strain>
    </source>
</reference>
<proteinExistence type="inferred from homology"/>
<dbReference type="EMBL" id="AP008229">
    <property type="protein sequence ID" value="BAE70290.1"/>
    <property type="molecule type" value="Genomic_DNA"/>
</dbReference>
<dbReference type="RefSeq" id="WP_011409337.1">
    <property type="nucleotide sequence ID" value="NC_007705.1"/>
</dbReference>
<dbReference type="SMR" id="Q2NZI7"/>
<dbReference type="KEGG" id="xom:XOO3535"/>
<dbReference type="HOGENOM" id="CLU_009039_0_0_6"/>
<dbReference type="GO" id="GO:0009279">
    <property type="term" value="C:cell outer membrane"/>
    <property type="evidence" value="ECO:0007669"/>
    <property type="project" value="UniProtKB-SubCell"/>
</dbReference>
<dbReference type="GO" id="GO:1990351">
    <property type="term" value="C:transporter complex"/>
    <property type="evidence" value="ECO:0007669"/>
    <property type="project" value="TreeGrafter"/>
</dbReference>
<dbReference type="GO" id="GO:0043165">
    <property type="term" value="P:Gram-negative-bacterium-type cell outer membrane assembly"/>
    <property type="evidence" value="ECO:0007669"/>
    <property type="project" value="UniProtKB-UniRule"/>
</dbReference>
<dbReference type="GO" id="GO:0015920">
    <property type="term" value="P:lipopolysaccharide transport"/>
    <property type="evidence" value="ECO:0007669"/>
    <property type="project" value="InterPro"/>
</dbReference>
<dbReference type="Gene3D" id="2.60.450.10">
    <property type="entry name" value="Lipopolysaccharide (LPS) transport protein A like domain"/>
    <property type="match status" value="1"/>
</dbReference>
<dbReference type="HAMAP" id="MF_01411">
    <property type="entry name" value="LPS_assembly_LptD"/>
    <property type="match status" value="1"/>
</dbReference>
<dbReference type="InterPro" id="IPR020889">
    <property type="entry name" value="LipoPS_assembly_LptD"/>
</dbReference>
<dbReference type="InterPro" id="IPR050218">
    <property type="entry name" value="LptD"/>
</dbReference>
<dbReference type="InterPro" id="IPR007543">
    <property type="entry name" value="LptD_C"/>
</dbReference>
<dbReference type="InterPro" id="IPR005653">
    <property type="entry name" value="OstA-like_N"/>
</dbReference>
<dbReference type="NCBIfam" id="NF003358">
    <property type="entry name" value="PRK04423.1"/>
    <property type="match status" value="1"/>
</dbReference>
<dbReference type="PANTHER" id="PTHR30189">
    <property type="entry name" value="LPS-ASSEMBLY PROTEIN"/>
    <property type="match status" value="1"/>
</dbReference>
<dbReference type="PANTHER" id="PTHR30189:SF1">
    <property type="entry name" value="LPS-ASSEMBLY PROTEIN LPTD"/>
    <property type="match status" value="1"/>
</dbReference>
<dbReference type="Pfam" id="PF04453">
    <property type="entry name" value="LptD"/>
    <property type="match status" value="1"/>
</dbReference>
<dbReference type="Pfam" id="PF03968">
    <property type="entry name" value="LptD_N"/>
    <property type="match status" value="1"/>
</dbReference>
<feature type="signal peptide" evidence="1">
    <location>
        <begin position="1"/>
        <end position="22"/>
    </location>
</feature>
<feature type="chain" id="PRO_0000281641" description="LPS-assembly protein LptD">
    <location>
        <begin position="23"/>
        <end position="813"/>
    </location>
</feature>